<organism>
    <name type="scientific">Leuconostoc citreum (strain KM20)</name>
    <dbReference type="NCBI Taxonomy" id="349519"/>
    <lineage>
        <taxon>Bacteria</taxon>
        <taxon>Bacillati</taxon>
        <taxon>Bacillota</taxon>
        <taxon>Bacilli</taxon>
        <taxon>Lactobacillales</taxon>
        <taxon>Lactobacillaceae</taxon>
        <taxon>Leuconostoc</taxon>
    </lineage>
</organism>
<feature type="chain" id="PRO_1000115881" description="Enolase">
    <location>
        <begin position="1"/>
        <end position="441"/>
    </location>
</feature>
<feature type="active site" description="Proton donor" evidence="1">
    <location>
        <position position="206"/>
    </location>
</feature>
<feature type="active site" description="Proton acceptor" evidence="1">
    <location>
        <position position="341"/>
    </location>
</feature>
<feature type="binding site" evidence="1">
    <location>
        <position position="164"/>
    </location>
    <ligand>
        <name>(2R)-2-phosphoglycerate</name>
        <dbReference type="ChEBI" id="CHEBI:58289"/>
    </ligand>
</feature>
<feature type="binding site" evidence="1">
    <location>
        <position position="243"/>
    </location>
    <ligand>
        <name>Mg(2+)</name>
        <dbReference type="ChEBI" id="CHEBI:18420"/>
    </ligand>
</feature>
<feature type="binding site" evidence="1">
    <location>
        <position position="289"/>
    </location>
    <ligand>
        <name>Mg(2+)</name>
        <dbReference type="ChEBI" id="CHEBI:18420"/>
    </ligand>
</feature>
<feature type="binding site" evidence="1">
    <location>
        <position position="316"/>
    </location>
    <ligand>
        <name>Mg(2+)</name>
        <dbReference type="ChEBI" id="CHEBI:18420"/>
    </ligand>
</feature>
<feature type="binding site" evidence="1">
    <location>
        <position position="341"/>
    </location>
    <ligand>
        <name>(2R)-2-phosphoglycerate</name>
        <dbReference type="ChEBI" id="CHEBI:58289"/>
    </ligand>
</feature>
<feature type="binding site" evidence="1">
    <location>
        <position position="370"/>
    </location>
    <ligand>
        <name>(2R)-2-phosphoglycerate</name>
        <dbReference type="ChEBI" id="CHEBI:58289"/>
    </ligand>
</feature>
<feature type="binding site" evidence="1">
    <location>
        <position position="371"/>
    </location>
    <ligand>
        <name>(2R)-2-phosphoglycerate</name>
        <dbReference type="ChEBI" id="CHEBI:58289"/>
    </ligand>
</feature>
<feature type="binding site" evidence="1">
    <location>
        <position position="392"/>
    </location>
    <ligand>
        <name>(2R)-2-phosphoglycerate</name>
        <dbReference type="ChEBI" id="CHEBI:58289"/>
    </ligand>
</feature>
<name>ENO_LEUCK</name>
<proteinExistence type="inferred from homology"/>
<gene>
    <name evidence="1" type="primary">eno</name>
    <name type="ordered locus">LCK_01543</name>
</gene>
<keyword id="KW-0963">Cytoplasm</keyword>
<keyword id="KW-0324">Glycolysis</keyword>
<keyword id="KW-0456">Lyase</keyword>
<keyword id="KW-0460">Magnesium</keyword>
<keyword id="KW-0479">Metal-binding</keyword>
<keyword id="KW-1185">Reference proteome</keyword>
<keyword id="KW-0964">Secreted</keyword>
<comment type="function">
    <text evidence="1">Catalyzes the reversible conversion of 2-phosphoglycerate (2-PG) into phosphoenolpyruvate (PEP). It is essential for the degradation of carbohydrates via glycolysis.</text>
</comment>
<comment type="catalytic activity">
    <reaction evidence="1">
        <text>(2R)-2-phosphoglycerate = phosphoenolpyruvate + H2O</text>
        <dbReference type="Rhea" id="RHEA:10164"/>
        <dbReference type="ChEBI" id="CHEBI:15377"/>
        <dbReference type="ChEBI" id="CHEBI:58289"/>
        <dbReference type="ChEBI" id="CHEBI:58702"/>
        <dbReference type="EC" id="4.2.1.11"/>
    </reaction>
</comment>
<comment type="cofactor">
    <cofactor evidence="1">
        <name>Mg(2+)</name>
        <dbReference type="ChEBI" id="CHEBI:18420"/>
    </cofactor>
    <text evidence="1">Binds a second Mg(2+) ion via substrate during catalysis.</text>
</comment>
<comment type="pathway">
    <text evidence="1">Carbohydrate degradation; glycolysis; pyruvate from D-glyceraldehyde 3-phosphate: step 4/5.</text>
</comment>
<comment type="subcellular location">
    <subcellularLocation>
        <location evidence="1">Cytoplasm</location>
    </subcellularLocation>
    <subcellularLocation>
        <location evidence="1">Secreted</location>
    </subcellularLocation>
    <subcellularLocation>
        <location evidence="1">Cell surface</location>
    </subcellularLocation>
    <text evidence="1">Fractions of enolase are present in both the cytoplasm and on the cell surface.</text>
</comment>
<comment type="similarity">
    <text evidence="1">Belongs to the enolase family.</text>
</comment>
<evidence type="ECO:0000255" key="1">
    <source>
        <dbReference type="HAMAP-Rule" id="MF_00318"/>
    </source>
</evidence>
<accession>B1MVW3</accession>
<protein>
    <recommendedName>
        <fullName evidence="1">Enolase</fullName>
        <ecNumber evidence="1">4.2.1.11</ecNumber>
    </recommendedName>
    <alternativeName>
        <fullName evidence="1">2-phospho-D-glycerate hydro-lyase</fullName>
    </alternativeName>
    <alternativeName>
        <fullName evidence="1">2-phosphoglycerate dehydratase</fullName>
    </alternativeName>
</protein>
<reference key="1">
    <citation type="journal article" date="2008" name="J. Bacteriol.">
        <title>Complete genome sequence of Leuconostoc citreum KM20.</title>
        <authorList>
            <person name="Kim J.F."/>
            <person name="Jeong H."/>
            <person name="Lee J.-S."/>
            <person name="Choi S.-H."/>
            <person name="Ha M."/>
            <person name="Hur C.-G."/>
            <person name="Kim J.-S."/>
            <person name="Lee S."/>
            <person name="Park H.-S."/>
            <person name="Park Y.-H."/>
            <person name="Oh T.K."/>
        </authorList>
    </citation>
    <scope>NUCLEOTIDE SEQUENCE [LARGE SCALE GENOMIC DNA]</scope>
    <source>
        <strain>KM20</strain>
    </source>
</reference>
<dbReference type="EC" id="4.2.1.11" evidence="1"/>
<dbReference type="EMBL" id="DQ489736">
    <property type="protein sequence ID" value="ACA83367.1"/>
    <property type="molecule type" value="Genomic_DNA"/>
</dbReference>
<dbReference type="RefSeq" id="WP_004899326.1">
    <property type="nucleotide sequence ID" value="NC_010471.1"/>
</dbReference>
<dbReference type="SMR" id="B1MVW3"/>
<dbReference type="STRING" id="349519.LCK_01543"/>
<dbReference type="KEGG" id="lci:LCK_01543"/>
<dbReference type="eggNOG" id="COG0148">
    <property type="taxonomic scope" value="Bacteria"/>
</dbReference>
<dbReference type="HOGENOM" id="CLU_031223_2_1_9"/>
<dbReference type="OrthoDB" id="9804716at2"/>
<dbReference type="UniPathway" id="UPA00109">
    <property type="reaction ID" value="UER00187"/>
</dbReference>
<dbReference type="Proteomes" id="UP000002166">
    <property type="component" value="Chromosome"/>
</dbReference>
<dbReference type="GO" id="GO:0009986">
    <property type="term" value="C:cell surface"/>
    <property type="evidence" value="ECO:0007669"/>
    <property type="project" value="UniProtKB-SubCell"/>
</dbReference>
<dbReference type="GO" id="GO:0005576">
    <property type="term" value="C:extracellular region"/>
    <property type="evidence" value="ECO:0007669"/>
    <property type="project" value="UniProtKB-SubCell"/>
</dbReference>
<dbReference type="GO" id="GO:0000015">
    <property type="term" value="C:phosphopyruvate hydratase complex"/>
    <property type="evidence" value="ECO:0007669"/>
    <property type="project" value="InterPro"/>
</dbReference>
<dbReference type="GO" id="GO:0000287">
    <property type="term" value="F:magnesium ion binding"/>
    <property type="evidence" value="ECO:0007669"/>
    <property type="project" value="UniProtKB-UniRule"/>
</dbReference>
<dbReference type="GO" id="GO:0004634">
    <property type="term" value="F:phosphopyruvate hydratase activity"/>
    <property type="evidence" value="ECO:0007669"/>
    <property type="project" value="UniProtKB-UniRule"/>
</dbReference>
<dbReference type="GO" id="GO:0006096">
    <property type="term" value="P:glycolytic process"/>
    <property type="evidence" value="ECO:0007669"/>
    <property type="project" value="UniProtKB-UniRule"/>
</dbReference>
<dbReference type="CDD" id="cd03313">
    <property type="entry name" value="enolase"/>
    <property type="match status" value="1"/>
</dbReference>
<dbReference type="FunFam" id="3.20.20.120:FF:000001">
    <property type="entry name" value="Enolase"/>
    <property type="match status" value="1"/>
</dbReference>
<dbReference type="FunFam" id="3.30.390.10:FF:000001">
    <property type="entry name" value="Enolase"/>
    <property type="match status" value="1"/>
</dbReference>
<dbReference type="Gene3D" id="3.20.20.120">
    <property type="entry name" value="Enolase-like C-terminal domain"/>
    <property type="match status" value="1"/>
</dbReference>
<dbReference type="Gene3D" id="3.30.390.10">
    <property type="entry name" value="Enolase-like, N-terminal domain"/>
    <property type="match status" value="1"/>
</dbReference>
<dbReference type="HAMAP" id="MF_00318">
    <property type="entry name" value="Enolase"/>
    <property type="match status" value="1"/>
</dbReference>
<dbReference type="InterPro" id="IPR000941">
    <property type="entry name" value="Enolase"/>
</dbReference>
<dbReference type="InterPro" id="IPR036849">
    <property type="entry name" value="Enolase-like_C_sf"/>
</dbReference>
<dbReference type="InterPro" id="IPR029017">
    <property type="entry name" value="Enolase-like_N"/>
</dbReference>
<dbReference type="InterPro" id="IPR020810">
    <property type="entry name" value="Enolase_C"/>
</dbReference>
<dbReference type="InterPro" id="IPR020809">
    <property type="entry name" value="Enolase_CS"/>
</dbReference>
<dbReference type="InterPro" id="IPR020811">
    <property type="entry name" value="Enolase_N"/>
</dbReference>
<dbReference type="NCBIfam" id="TIGR01060">
    <property type="entry name" value="eno"/>
    <property type="match status" value="1"/>
</dbReference>
<dbReference type="PANTHER" id="PTHR11902">
    <property type="entry name" value="ENOLASE"/>
    <property type="match status" value="1"/>
</dbReference>
<dbReference type="PANTHER" id="PTHR11902:SF1">
    <property type="entry name" value="ENOLASE"/>
    <property type="match status" value="1"/>
</dbReference>
<dbReference type="Pfam" id="PF00113">
    <property type="entry name" value="Enolase_C"/>
    <property type="match status" value="1"/>
</dbReference>
<dbReference type="Pfam" id="PF03952">
    <property type="entry name" value="Enolase_N"/>
    <property type="match status" value="1"/>
</dbReference>
<dbReference type="PIRSF" id="PIRSF001400">
    <property type="entry name" value="Enolase"/>
    <property type="match status" value="1"/>
</dbReference>
<dbReference type="PRINTS" id="PR00148">
    <property type="entry name" value="ENOLASE"/>
</dbReference>
<dbReference type="SFLD" id="SFLDS00001">
    <property type="entry name" value="Enolase"/>
    <property type="match status" value="1"/>
</dbReference>
<dbReference type="SFLD" id="SFLDF00002">
    <property type="entry name" value="enolase"/>
    <property type="match status" value="1"/>
</dbReference>
<dbReference type="SMART" id="SM01192">
    <property type="entry name" value="Enolase_C"/>
    <property type="match status" value="1"/>
</dbReference>
<dbReference type="SMART" id="SM01193">
    <property type="entry name" value="Enolase_N"/>
    <property type="match status" value="1"/>
</dbReference>
<dbReference type="SUPFAM" id="SSF51604">
    <property type="entry name" value="Enolase C-terminal domain-like"/>
    <property type="match status" value="1"/>
</dbReference>
<dbReference type="SUPFAM" id="SSF54826">
    <property type="entry name" value="Enolase N-terminal domain-like"/>
    <property type="match status" value="1"/>
</dbReference>
<dbReference type="PROSITE" id="PS00164">
    <property type="entry name" value="ENOLASE"/>
    <property type="match status" value="1"/>
</dbReference>
<sequence>MSLITDIIAREVLDSRGNPTLEAEVITELGGFGRGMVPSGASTGEHEAVELRDGDKSRFGGKGTTKAVANVNDVIAKALVGKFDVTDQRAIDQAMIELDGTENKGKLGANAILAVSIAAARAAADELGVPLFSYLGGANSYVLPTPMMNVINGGAHSANKVDFQEFMIMPVGAPTVKEAIRYGAETFHALKKLLEADGKATSVGDEGGFAPDFADNEEPLKYLIRAIEAAGYKPGKDIAIAVDVASSELYDAATKTYKLRWSTGDEFTTPEFIKYLEDLADRYPIISIEDPIDENEWEDWAEITSELGKKVQLVGDDFFVTNTQYLQKGINMGAANSILIKVNQIGTLTETFEAIEMAKEAGYTAIVSHRSGETEDTTISDLVVATNAGQIKTGSLSRTDRIAKYNQLIRIEELLDTTAQYKGIHSFYNLSAAAREAIQAK</sequence>